<evidence type="ECO:0000255" key="1">
    <source>
        <dbReference type="HAMAP-Rule" id="MF_01322"/>
    </source>
</evidence>
<feature type="chain" id="PRO_1000214494" description="DNA-directed RNA polymerase subunit beta'">
    <location>
        <begin position="1"/>
        <end position="1382"/>
    </location>
</feature>
<feature type="binding site" evidence="1">
    <location>
        <position position="70"/>
    </location>
    <ligand>
        <name>Zn(2+)</name>
        <dbReference type="ChEBI" id="CHEBI:29105"/>
        <label>1</label>
    </ligand>
</feature>
<feature type="binding site" evidence="1">
    <location>
        <position position="72"/>
    </location>
    <ligand>
        <name>Zn(2+)</name>
        <dbReference type="ChEBI" id="CHEBI:29105"/>
        <label>1</label>
    </ligand>
</feature>
<feature type="binding site" evidence="1">
    <location>
        <position position="85"/>
    </location>
    <ligand>
        <name>Zn(2+)</name>
        <dbReference type="ChEBI" id="CHEBI:29105"/>
        <label>1</label>
    </ligand>
</feature>
<feature type="binding site" evidence="1">
    <location>
        <position position="88"/>
    </location>
    <ligand>
        <name>Zn(2+)</name>
        <dbReference type="ChEBI" id="CHEBI:29105"/>
        <label>1</label>
    </ligand>
</feature>
<feature type="binding site" evidence="1">
    <location>
        <position position="460"/>
    </location>
    <ligand>
        <name>Mg(2+)</name>
        <dbReference type="ChEBI" id="CHEBI:18420"/>
    </ligand>
</feature>
<feature type="binding site" evidence="1">
    <location>
        <position position="462"/>
    </location>
    <ligand>
        <name>Mg(2+)</name>
        <dbReference type="ChEBI" id="CHEBI:18420"/>
    </ligand>
</feature>
<feature type="binding site" evidence="1">
    <location>
        <position position="464"/>
    </location>
    <ligand>
        <name>Mg(2+)</name>
        <dbReference type="ChEBI" id="CHEBI:18420"/>
    </ligand>
</feature>
<feature type="binding site" evidence="1">
    <location>
        <position position="808"/>
    </location>
    <ligand>
        <name>Zn(2+)</name>
        <dbReference type="ChEBI" id="CHEBI:29105"/>
        <label>2</label>
    </ligand>
</feature>
<feature type="binding site" evidence="1">
    <location>
        <position position="882"/>
    </location>
    <ligand>
        <name>Zn(2+)</name>
        <dbReference type="ChEBI" id="CHEBI:29105"/>
        <label>2</label>
    </ligand>
</feature>
<feature type="binding site" evidence="1">
    <location>
        <position position="889"/>
    </location>
    <ligand>
        <name>Zn(2+)</name>
        <dbReference type="ChEBI" id="CHEBI:29105"/>
        <label>2</label>
    </ligand>
</feature>
<feature type="binding site" evidence="1">
    <location>
        <position position="892"/>
    </location>
    <ligand>
        <name>Zn(2+)</name>
        <dbReference type="ChEBI" id="CHEBI:29105"/>
        <label>2</label>
    </ligand>
</feature>
<accession>C6E4R3</accession>
<gene>
    <name evidence="1" type="primary">rpoC</name>
    <name type="ordered locus">GM21_3334</name>
</gene>
<protein>
    <recommendedName>
        <fullName evidence="1">DNA-directed RNA polymerase subunit beta'</fullName>
        <shortName evidence="1">RNAP subunit beta'</shortName>
        <ecNumber evidence="1">2.7.7.6</ecNumber>
    </recommendedName>
    <alternativeName>
        <fullName evidence="1">RNA polymerase subunit beta'</fullName>
    </alternativeName>
    <alternativeName>
        <fullName evidence="1">Transcriptase subunit beta'</fullName>
    </alternativeName>
</protein>
<reference key="1">
    <citation type="submission" date="2009-07" db="EMBL/GenBank/DDBJ databases">
        <title>Complete sequence of Geobacter sp. M21.</title>
        <authorList>
            <consortium name="US DOE Joint Genome Institute"/>
            <person name="Lucas S."/>
            <person name="Copeland A."/>
            <person name="Lapidus A."/>
            <person name="Glavina del Rio T."/>
            <person name="Dalin E."/>
            <person name="Tice H."/>
            <person name="Bruce D."/>
            <person name="Goodwin L."/>
            <person name="Pitluck S."/>
            <person name="Saunders E."/>
            <person name="Brettin T."/>
            <person name="Detter J.C."/>
            <person name="Han C."/>
            <person name="Larimer F."/>
            <person name="Land M."/>
            <person name="Hauser L."/>
            <person name="Kyrpides N."/>
            <person name="Ovchinnikova G."/>
            <person name="Lovley D."/>
        </authorList>
    </citation>
    <scope>NUCLEOTIDE SEQUENCE [LARGE SCALE GENOMIC DNA]</scope>
    <source>
        <strain>M21</strain>
    </source>
</reference>
<name>RPOC_GEOSM</name>
<organism>
    <name type="scientific">Geobacter sp. (strain M21)</name>
    <dbReference type="NCBI Taxonomy" id="443144"/>
    <lineage>
        <taxon>Bacteria</taxon>
        <taxon>Pseudomonadati</taxon>
        <taxon>Thermodesulfobacteriota</taxon>
        <taxon>Desulfuromonadia</taxon>
        <taxon>Geobacterales</taxon>
        <taxon>Geobacteraceae</taxon>
        <taxon>Geobacter</taxon>
    </lineage>
</organism>
<keyword id="KW-0240">DNA-directed RNA polymerase</keyword>
<keyword id="KW-0460">Magnesium</keyword>
<keyword id="KW-0479">Metal-binding</keyword>
<keyword id="KW-0548">Nucleotidyltransferase</keyword>
<keyword id="KW-0804">Transcription</keyword>
<keyword id="KW-0808">Transferase</keyword>
<keyword id="KW-0862">Zinc</keyword>
<sequence length="1382" mass="153915">MEDIFNFFDKPKDPLHFSSIKISISSPDKIRERSFGEVKKPETINYRTFKPERDGLFCAKIFGPTKDYECNCGKYKRMKHRGIVCEKCGVEVIPSKVRRERLGHIDLATPVAHIWFLKSLPSRIGNLMDITLKDLEKVLYFEAYVVTDPKETGLAFGTVFSEDQYQKALEEYSYGFEAGMGAAAIRTCLTSMDLDQLSEQLRIEMQEATSEAKRKKTAKRLKVMEAFKNSGNKPEWMILECIPVLPPELRPLVPLDGGRFATSDLNDLYRRVINRNNRLKRLMELQAPEVIIRNEKRMLQEAVDALFDNGRRGRAIAGPNKRPLKSLSDMLKGKSGRFRQNLLGKRVDYSGRSVIVVGPELRLHQCGLPKKMALELFKPFIYNKLEERGFVTTIKSAKKMVEKEKPEVWDVLEEVIKEHPVLLNRAPTLHRLGIQAFEPVLIEGKAIQLHPLVCTAFNADFDGDQMAVHLPLSVESQVEARVLMMSTNNILSPAHGKPIIVPSQDMVLGIYYMTREKHFALGEGKIFASADEVNIAWDAGEIHLQARIKVRMKNLVSDEKPTLIETTTGRVLLRDILPDAVPYATINKVMTKKELSNLVDVCYRLAGNKETVILADKLKAIGFRYAAKAGISISINDMVIPEGKPAIITRATEEVQEIQNQYTEGLITDGERYNKVIDIWAKSTEDIAKEMLDNLSRDTILDPEGKEVKVPSFNAIHMMADSGARGSAQQIRQLAGMRGLMAKPSGEIIETPITANFREGLTVLQYFISTHGARKGLADTALKTANSGYLTRRLVDVAQDAIITEADCGTIDGLTVSSLTEGGEVIEHIGDRILGRVALDDILDPVTGDVLVPANEEIDENLVARIEAAGLEKVKIRSVLTCESRRGICAKCYGRDLARGHLVNRGEAVGVIAAQSIGEPGTQLTMRTFHIGGTASRRAEQTALEARNEGFAKFININYVTNSEGHHIVMNRNGELAIVDETGREREKYGVVYGAKIKVSPQEKVTQGQSVAEWDPYTMPILTEIAGRVKFGDVIEGVTMEEQVDEVTGLSRKVIIETRDADKRPRITIKDESGKTAKIGDSLLARYYLPVGSNINVLEDTEVNAGDVIAKIPRETTKTKDITGGLPRVAELFEARKPKDFAVITEIDGVVAFGKDAKGKRKVLVTPELGEPKEYLIPKGKHISVHEGDHVRAGEALMDGSSNPHDILRVLGQKELAKYLVDEVQEVYRLQGVKINDKHIETIVRQMLRRVRVKDVGDTNLLIDDQIERWVFEEENEKAMDKGGRPATAESLLLGITKASLSTESFISAASFQETTKVLTQASIEGKIDSLRGLKENVIMGRLIPAGTGLALYRNLRMVAEEPVIIPEPVEPEDEEIYEEEA</sequence>
<dbReference type="EC" id="2.7.7.6" evidence="1"/>
<dbReference type="EMBL" id="CP001661">
    <property type="protein sequence ID" value="ACT19359.1"/>
    <property type="molecule type" value="Genomic_DNA"/>
</dbReference>
<dbReference type="SMR" id="C6E4R3"/>
<dbReference type="STRING" id="443144.GM21_3334"/>
<dbReference type="KEGG" id="gem:GM21_3334"/>
<dbReference type="eggNOG" id="COG0086">
    <property type="taxonomic scope" value="Bacteria"/>
</dbReference>
<dbReference type="HOGENOM" id="CLU_000524_3_1_7"/>
<dbReference type="OrthoDB" id="9815296at2"/>
<dbReference type="GO" id="GO:0000428">
    <property type="term" value="C:DNA-directed RNA polymerase complex"/>
    <property type="evidence" value="ECO:0007669"/>
    <property type="project" value="UniProtKB-KW"/>
</dbReference>
<dbReference type="GO" id="GO:0003677">
    <property type="term" value="F:DNA binding"/>
    <property type="evidence" value="ECO:0007669"/>
    <property type="project" value="UniProtKB-UniRule"/>
</dbReference>
<dbReference type="GO" id="GO:0003899">
    <property type="term" value="F:DNA-directed RNA polymerase activity"/>
    <property type="evidence" value="ECO:0007669"/>
    <property type="project" value="UniProtKB-UniRule"/>
</dbReference>
<dbReference type="GO" id="GO:0000287">
    <property type="term" value="F:magnesium ion binding"/>
    <property type="evidence" value="ECO:0007669"/>
    <property type="project" value="UniProtKB-UniRule"/>
</dbReference>
<dbReference type="GO" id="GO:0008270">
    <property type="term" value="F:zinc ion binding"/>
    <property type="evidence" value="ECO:0007669"/>
    <property type="project" value="UniProtKB-UniRule"/>
</dbReference>
<dbReference type="GO" id="GO:0006351">
    <property type="term" value="P:DNA-templated transcription"/>
    <property type="evidence" value="ECO:0007669"/>
    <property type="project" value="UniProtKB-UniRule"/>
</dbReference>
<dbReference type="CDD" id="cd02655">
    <property type="entry name" value="RNAP_beta'_C"/>
    <property type="match status" value="1"/>
</dbReference>
<dbReference type="CDD" id="cd01609">
    <property type="entry name" value="RNAP_beta'_N"/>
    <property type="match status" value="1"/>
</dbReference>
<dbReference type="FunFam" id="1.10.132.30:FF:000003">
    <property type="entry name" value="DNA-directed RNA polymerase subunit beta"/>
    <property type="match status" value="1"/>
</dbReference>
<dbReference type="FunFam" id="1.10.150.390:FF:000002">
    <property type="entry name" value="DNA-directed RNA polymerase subunit beta"/>
    <property type="match status" value="1"/>
</dbReference>
<dbReference type="FunFam" id="1.10.40.90:FF:000001">
    <property type="entry name" value="DNA-directed RNA polymerase subunit beta"/>
    <property type="match status" value="1"/>
</dbReference>
<dbReference type="Gene3D" id="1.10.132.30">
    <property type="match status" value="1"/>
</dbReference>
<dbReference type="Gene3D" id="1.10.150.390">
    <property type="match status" value="1"/>
</dbReference>
<dbReference type="Gene3D" id="1.10.1790.20">
    <property type="match status" value="1"/>
</dbReference>
<dbReference type="Gene3D" id="1.10.40.90">
    <property type="match status" value="1"/>
</dbReference>
<dbReference type="Gene3D" id="2.40.40.20">
    <property type="match status" value="1"/>
</dbReference>
<dbReference type="Gene3D" id="2.40.50.100">
    <property type="match status" value="3"/>
</dbReference>
<dbReference type="Gene3D" id="4.10.860.120">
    <property type="entry name" value="RNA polymerase II, clamp domain"/>
    <property type="match status" value="1"/>
</dbReference>
<dbReference type="Gene3D" id="1.10.274.100">
    <property type="entry name" value="RNA polymerase Rpb1, domain 3"/>
    <property type="match status" value="2"/>
</dbReference>
<dbReference type="HAMAP" id="MF_01322">
    <property type="entry name" value="RNApol_bact_RpoC"/>
    <property type="match status" value="1"/>
</dbReference>
<dbReference type="InterPro" id="IPR045867">
    <property type="entry name" value="DNA-dir_RpoC_beta_prime"/>
</dbReference>
<dbReference type="InterPro" id="IPR012754">
    <property type="entry name" value="DNA-dir_RpoC_beta_prime_bact"/>
</dbReference>
<dbReference type="InterPro" id="IPR000722">
    <property type="entry name" value="RNA_pol_asu"/>
</dbReference>
<dbReference type="InterPro" id="IPR006592">
    <property type="entry name" value="RNA_pol_N"/>
</dbReference>
<dbReference type="InterPro" id="IPR007080">
    <property type="entry name" value="RNA_pol_Rpb1_1"/>
</dbReference>
<dbReference type="InterPro" id="IPR007066">
    <property type="entry name" value="RNA_pol_Rpb1_3"/>
</dbReference>
<dbReference type="InterPro" id="IPR042102">
    <property type="entry name" value="RNA_pol_Rpb1_3_sf"/>
</dbReference>
<dbReference type="InterPro" id="IPR007083">
    <property type="entry name" value="RNA_pol_Rpb1_4"/>
</dbReference>
<dbReference type="InterPro" id="IPR007081">
    <property type="entry name" value="RNA_pol_Rpb1_5"/>
</dbReference>
<dbReference type="InterPro" id="IPR044893">
    <property type="entry name" value="RNA_pol_Rpb1_clamp_domain"/>
</dbReference>
<dbReference type="InterPro" id="IPR038120">
    <property type="entry name" value="Rpb1_funnel_sf"/>
</dbReference>
<dbReference type="NCBIfam" id="TIGR02386">
    <property type="entry name" value="rpoC_TIGR"/>
    <property type="match status" value="1"/>
</dbReference>
<dbReference type="PANTHER" id="PTHR19376">
    <property type="entry name" value="DNA-DIRECTED RNA POLYMERASE"/>
    <property type="match status" value="1"/>
</dbReference>
<dbReference type="PANTHER" id="PTHR19376:SF54">
    <property type="entry name" value="DNA-DIRECTED RNA POLYMERASE SUBUNIT BETA"/>
    <property type="match status" value="1"/>
</dbReference>
<dbReference type="Pfam" id="PF04997">
    <property type="entry name" value="RNA_pol_Rpb1_1"/>
    <property type="match status" value="1"/>
</dbReference>
<dbReference type="Pfam" id="PF00623">
    <property type="entry name" value="RNA_pol_Rpb1_2"/>
    <property type="match status" value="1"/>
</dbReference>
<dbReference type="Pfam" id="PF04983">
    <property type="entry name" value="RNA_pol_Rpb1_3"/>
    <property type="match status" value="1"/>
</dbReference>
<dbReference type="Pfam" id="PF05000">
    <property type="entry name" value="RNA_pol_Rpb1_4"/>
    <property type="match status" value="1"/>
</dbReference>
<dbReference type="Pfam" id="PF04998">
    <property type="entry name" value="RNA_pol_Rpb1_5"/>
    <property type="match status" value="1"/>
</dbReference>
<dbReference type="SMART" id="SM00663">
    <property type="entry name" value="RPOLA_N"/>
    <property type="match status" value="1"/>
</dbReference>
<dbReference type="SUPFAM" id="SSF64484">
    <property type="entry name" value="beta and beta-prime subunits of DNA dependent RNA-polymerase"/>
    <property type="match status" value="1"/>
</dbReference>
<comment type="function">
    <text evidence="1">DNA-dependent RNA polymerase catalyzes the transcription of DNA into RNA using the four ribonucleoside triphosphates as substrates.</text>
</comment>
<comment type="catalytic activity">
    <reaction evidence="1">
        <text>RNA(n) + a ribonucleoside 5'-triphosphate = RNA(n+1) + diphosphate</text>
        <dbReference type="Rhea" id="RHEA:21248"/>
        <dbReference type="Rhea" id="RHEA-COMP:14527"/>
        <dbReference type="Rhea" id="RHEA-COMP:17342"/>
        <dbReference type="ChEBI" id="CHEBI:33019"/>
        <dbReference type="ChEBI" id="CHEBI:61557"/>
        <dbReference type="ChEBI" id="CHEBI:140395"/>
        <dbReference type="EC" id="2.7.7.6"/>
    </reaction>
</comment>
<comment type="cofactor">
    <cofactor evidence="1">
        <name>Mg(2+)</name>
        <dbReference type="ChEBI" id="CHEBI:18420"/>
    </cofactor>
    <text evidence="1">Binds 1 Mg(2+) ion per subunit.</text>
</comment>
<comment type="cofactor">
    <cofactor evidence="1">
        <name>Zn(2+)</name>
        <dbReference type="ChEBI" id="CHEBI:29105"/>
    </cofactor>
    <text evidence="1">Binds 2 Zn(2+) ions per subunit.</text>
</comment>
<comment type="subunit">
    <text evidence="1">The RNAP catalytic core consists of 2 alpha, 1 beta, 1 beta' and 1 omega subunit. When a sigma factor is associated with the core the holoenzyme is formed, which can initiate transcription.</text>
</comment>
<comment type="similarity">
    <text evidence="1">Belongs to the RNA polymerase beta' chain family.</text>
</comment>
<proteinExistence type="inferred from homology"/>